<evidence type="ECO:0000250" key="1"/>
<evidence type="ECO:0000255" key="2"/>
<evidence type="ECO:0000255" key="3">
    <source>
        <dbReference type="PROSITE-ProRule" id="PRU00043"/>
    </source>
</evidence>
<evidence type="ECO:0000303" key="4">
    <source>
    </source>
</evidence>
<evidence type="ECO:0000303" key="5">
    <source>
    </source>
</evidence>
<evidence type="ECO:0000305" key="6"/>
<keyword id="KW-0025">Alternative splicing</keyword>
<keyword id="KW-0106">Calcium</keyword>
<keyword id="KW-0130">Cell adhesion</keyword>
<keyword id="KW-0325">Glycoprotein</keyword>
<keyword id="KW-0472">Membrane</keyword>
<keyword id="KW-1267">Proteomics identification</keyword>
<keyword id="KW-1185">Reference proteome</keyword>
<keyword id="KW-0677">Repeat</keyword>
<keyword id="KW-0732">Signal</keyword>
<keyword id="KW-0812">Transmembrane</keyword>
<keyword id="KW-1133">Transmembrane helix</keyword>
<sequence length="788" mass="85827">MVLLRLLVFLFAPVVSDLCSLPCFINVSESQGPGTVLQFLSFNCSSYTPTPTLELLNVQPPTTFFNPPSLARWQGTYVGKLTLSSSAQLDALMVNHYKVQLKFTCGNHVMEGSLSVDVQRDLSHIQCAGQFASPAGEMIQVPETVTPGARLYTLLLPGLELHGAQMSIISAQDLPHFPGPFSINEQGWLQAPSQGLLGQAQKVFQLQISVSFGQRQSCQGMVIVKVLPVPSSQVSFLEQAQNITIPENLAPGSEVVQVQARGVDLRYEILSPVPSPLFSIGRADGVVRTTTPLELARTSGTAVSRLQVKAFEQGQLWASAKLNLTMNVQLVNLWPPRCLPALLVSQIPETAPVGTVLNTLTCEDPDSVGATLDYKLWFRSSSNPASLCLYDRVLEVNATLDCDTPGACFQHAASILVLDGGQPQMTTEVPVLVMVTPINEFSPACAPRTFRVQEDAAPHTLLGSVVGTDMDYPHDNIEYYTSGGPTTFAVDRLSGEVHLLGPLDYEQQRLYRLTVLVIDHGQDQNPNHHLSGSCTITIEVEDVNDHAPECEPPFQELTIYAPLGRSVEVTKMSCQIPQEPQRLIYSYSIVGGNSQNRFILQGAILVHSDLVLGPFWPEQPRTYELLICVADAGPSTPHLSTTATIIVHLVPRRASTVATSTHRTTVPSTMTPMLVTDTEAFWQPQPWFVVVLTATGALLLLALGWLLGRLLQGLAQLLQAPSKPAQALLLNSIQGTEGSIEGFLEAPKMEMSQAPSSVMSLHFDGRAQDSRTGRDYLFNTHTGARRWL</sequence>
<reference key="1">
    <citation type="journal article" date="2003" name="Genome Res.">
        <title>The secreted protein discovery initiative (SPDI), a large-scale effort to identify novel human secreted and transmembrane proteins: a bioinformatics assessment.</title>
        <authorList>
            <person name="Clark H.F."/>
            <person name="Gurney A.L."/>
            <person name="Abaya E."/>
            <person name="Baker K."/>
            <person name="Baldwin D.T."/>
            <person name="Brush J."/>
            <person name="Chen J."/>
            <person name="Chow B."/>
            <person name="Chui C."/>
            <person name="Crowley C."/>
            <person name="Currell B."/>
            <person name="Deuel B."/>
            <person name="Dowd P."/>
            <person name="Eaton D."/>
            <person name="Foster J.S."/>
            <person name="Grimaldi C."/>
            <person name="Gu Q."/>
            <person name="Hass P.E."/>
            <person name="Heldens S."/>
            <person name="Huang A."/>
            <person name="Kim H.S."/>
            <person name="Klimowski L."/>
            <person name="Jin Y."/>
            <person name="Johnson S."/>
            <person name="Lee J."/>
            <person name="Lewis L."/>
            <person name="Liao D."/>
            <person name="Mark M.R."/>
            <person name="Robbie E."/>
            <person name="Sanchez C."/>
            <person name="Schoenfeld J."/>
            <person name="Seshagiri S."/>
            <person name="Simmons L."/>
            <person name="Singh J."/>
            <person name="Smith V."/>
            <person name="Stinson J."/>
            <person name="Vagts A."/>
            <person name="Vandlen R.L."/>
            <person name="Watanabe C."/>
            <person name="Wieand D."/>
            <person name="Woods K."/>
            <person name="Xie M.-H."/>
            <person name="Yansura D.G."/>
            <person name="Yi S."/>
            <person name="Yu G."/>
            <person name="Yuan J."/>
            <person name="Zhang M."/>
            <person name="Zhang Z."/>
            <person name="Goddard A.D."/>
            <person name="Wood W.I."/>
            <person name="Godowski P.J."/>
            <person name="Gray A.M."/>
        </authorList>
    </citation>
    <scope>NUCLEOTIDE SEQUENCE [LARGE SCALE MRNA] (ISOFORM 2)</scope>
</reference>
<reference key="2">
    <citation type="journal article" date="2004" name="Genome Res.">
        <title>The status, quality, and expansion of the NIH full-length cDNA project: the Mammalian Gene Collection (MGC).</title>
        <authorList>
            <consortium name="The MGC Project Team"/>
        </authorList>
    </citation>
    <scope>NUCLEOTIDE SEQUENCE [LARGE SCALE MRNA] (ISOFORMS 1 AND 2)</scope>
</reference>
<gene>
    <name type="primary">CDHR4</name>
    <name type="synonym">CDH29</name>
    <name type="ORF">UNQ9392/PRO34300</name>
</gene>
<feature type="signal peptide" evidence="2">
    <location>
        <begin position="1"/>
        <end position="16"/>
    </location>
</feature>
<feature type="chain" id="PRO_0000319973" description="Cadherin-related family member 4">
    <location>
        <begin position="17"/>
        <end position="788"/>
    </location>
</feature>
<feature type="topological domain" description="Extracellular" evidence="2">
    <location>
        <begin position="17"/>
        <end position="686"/>
    </location>
</feature>
<feature type="transmembrane region" description="Helical" evidence="2">
    <location>
        <begin position="687"/>
        <end position="707"/>
    </location>
</feature>
<feature type="topological domain" description="Cytoplasmic" evidence="2">
    <location>
        <begin position="708"/>
        <end position="788"/>
    </location>
</feature>
<feature type="domain" description="Cadherin 1" evidence="3">
    <location>
        <begin position="237"/>
        <end position="338"/>
    </location>
</feature>
<feature type="domain" description="Cadherin 2" evidence="3">
    <location>
        <begin position="339"/>
        <end position="449"/>
    </location>
</feature>
<feature type="domain" description="Cadherin 3" evidence="3">
    <location>
        <begin position="444"/>
        <end position="554"/>
    </location>
</feature>
<feature type="domain" description="Cadherin 4" evidence="3">
    <location>
        <begin position="551"/>
        <end position="674"/>
    </location>
</feature>
<feature type="glycosylation site" description="N-linked (GlcNAc...) asparagine" evidence="2">
    <location>
        <position position="242"/>
    </location>
</feature>
<feature type="splice variant" id="VSP_031552" description="In isoform 2." evidence="4 5">
    <original>A</original>
    <variation>GEARGSRQGGGRHGLSRSSLTSTLASWGNDSGARDSHTWGSAVHSAPPRPRTPRSAGKPRTWDGG</variation>
    <location>
        <position position="135"/>
    </location>
</feature>
<feature type="splice variant" id="VSP_031553" description="In isoform 2." evidence="4 5">
    <location>
        <begin position="136"/>
        <end position="788"/>
    </location>
</feature>
<feature type="sequence variant" id="VAR_039109" description="In dbSNP:rs13072748.">
    <original>R</original>
    <variation>K</variation>
    <location>
        <position position="5"/>
    </location>
</feature>
<accession>A6H8M9</accession>
<accession>Q6UXT0</accession>
<comment type="function">
    <text evidence="1">Cadherins are calcium-dependent cell adhesion proteins. They preferentially interact with themselves in a homophilic manner in connecting cells; cadherins may thus contribute to the sorting of heterogeneous cell types (By similarity).</text>
</comment>
<comment type="subcellular location">
    <subcellularLocation>
        <location evidence="6">Membrane</location>
        <topology evidence="6">Single-pass type I membrane protein</topology>
    </subcellularLocation>
</comment>
<comment type="alternative products">
    <event type="alternative splicing"/>
    <isoform>
        <id>A6H8M9-1</id>
        <name>1</name>
        <sequence type="displayed"/>
    </isoform>
    <isoform>
        <id>A6H8M9-2</id>
        <name>2</name>
        <sequence type="described" ref="VSP_031552 VSP_031553"/>
    </isoform>
</comment>
<organism>
    <name type="scientific">Homo sapiens</name>
    <name type="common">Human</name>
    <dbReference type="NCBI Taxonomy" id="9606"/>
    <lineage>
        <taxon>Eukaryota</taxon>
        <taxon>Metazoa</taxon>
        <taxon>Chordata</taxon>
        <taxon>Craniata</taxon>
        <taxon>Vertebrata</taxon>
        <taxon>Euteleostomi</taxon>
        <taxon>Mammalia</taxon>
        <taxon>Eutheria</taxon>
        <taxon>Euarchontoglires</taxon>
        <taxon>Primates</taxon>
        <taxon>Haplorrhini</taxon>
        <taxon>Catarrhini</taxon>
        <taxon>Hominidae</taxon>
        <taxon>Homo</taxon>
    </lineage>
</organism>
<proteinExistence type="evidence at protein level"/>
<protein>
    <recommendedName>
        <fullName>Cadherin-related family member 4</fullName>
    </recommendedName>
    <alternativeName>
        <fullName>Cadherin-like protein 29</fullName>
    </alternativeName>
</protein>
<dbReference type="EMBL" id="AY358221">
    <property type="protein sequence ID" value="AAQ88588.1"/>
    <property type="molecule type" value="mRNA"/>
</dbReference>
<dbReference type="EMBL" id="BC132756">
    <property type="protein sequence ID" value="AAI32757.1"/>
    <property type="molecule type" value="mRNA"/>
</dbReference>
<dbReference type="EMBL" id="BC146674">
    <property type="protein sequence ID" value="AAI46675.1"/>
    <property type="molecule type" value="mRNA"/>
</dbReference>
<dbReference type="CCDS" id="CCDS46829.1">
    <molecule id="A6H8M9-1"/>
</dbReference>
<dbReference type="RefSeq" id="NP_001007541.2">
    <molecule id="A6H8M9-1"/>
    <property type="nucleotide sequence ID" value="NM_001007540.4"/>
</dbReference>
<dbReference type="SMR" id="A6H8M9"/>
<dbReference type="BioGRID" id="132983">
    <property type="interactions" value="95"/>
</dbReference>
<dbReference type="FunCoup" id="A6H8M9">
    <property type="interactions" value="11"/>
</dbReference>
<dbReference type="IntAct" id="A6H8M9">
    <property type="interactions" value="68"/>
</dbReference>
<dbReference type="STRING" id="9606.ENSP00000391409"/>
<dbReference type="GlyCosmos" id="A6H8M9">
    <property type="glycosylation" value="1 site, No reported glycans"/>
</dbReference>
<dbReference type="GlyGen" id="A6H8M9">
    <property type="glycosylation" value="2 sites"/>
</dbReference>
<dbReference type="iPTMnet" id="A6H8M9"/>
<dbReference type="PhosphoSitePlus" id="A6H8M9"/>
<dbReference type="BioMuta" id="CDHR4"/>
<dbReference type="jPOST" id="A6H8M9"/>
<dbReference type="MassIVE" id="A6H8M9"/>
<dbReference type="PaxDb" id="9606-ENSP00000391409"/>
<dbReference type="PeptideAtlas" id="A6H8M9"/>
<dbReference type="ProteomicsDB" id="775">
    <molecule id="A6H8M9-1"/>
</dbReference>
<dbReference type="Antibodypedia" id="49593">
    <property type="antibodies" value="22 antibodies from 8 providers"/>
</dbReference>
<dbReference type="DNASU" id="389118"/>
<dbReference type="Ensembl" id="ENST00000343366.8">
    <molecule id="A6H8M9-2"/>
    <property type="protein sequence ID" value="ENSP00000341302.4"/>
    <property type="gene ID" value="ENSG00000187492.9"/>
</dbReference>
<dbReference type="Ensembl" id="ENST00000412678.7">
    <molecule id="A6H8M9-1"/>
    <property type="protein sequence ID" value="ENSP00000391409.2"/>
    <property type="gene ID" value="ENSG00000187492.9"/>
</dbReference>
<dbReference type="GeneID" id="389118"/>
<dbReference type="KEGG" id="hsa:389118"/>
<dbReference type="MANE-Select" id="ENST00000412678.7">
    <property type="protein sequence ID" value="ENSP00000391409.2"/>
    <property type="RefSeq nucleotide sequence ID" value="NM_001007540.4"/>
    <property type="RefSeq protein sequence ID" value="NP_001007541.2"/>
</dbReference>
<dbReference type="UCSC" id="uc003cxp.3">
    <molecule id="A6H8M9-1"/>
    <property type="organism name" value="human"/>
</dbReference>
<dbReference type="AGR" id="HGNC:34527"/>
<dbReference type="CTD" id="389118"/>
<dbReference type="DisGeNET" id="389118"/>
<dbReference type="GeneCards" id="CDHR4"/>
<dbReference type="HGNC" id="HGNC:34527">
    <property type="gene designation" value="CDHR4"/>
</dbReference>
<dbReference type="HPA" id="ENSG00000187492">
    <property type="expression patterns" value="Tissue enriched (fallopian)"/>
</dbReference>
<dbReference type="neXtProt" id="NX_A6H8M9"/>
<dbReference type="OpenTargets" id="ENSG00000187492"/>
<dbReference type="PharmGKB" id="PA165696944"/>
<dbReference type="VEuPathDB" id="HostDB:ENSG00000187492"/>
<dbReference type="eggNOG" id="KOG1219">
    <property type="taxonomic scope" value="Eukaryota"/>
</dbReference>
<dbReference type="GeneTree" id="ENSGT00940000162824"/>
<dbReference type="HOGENOM" id="CLU_382923_0_0_1"/>
<dbReference type="InParanoid" id="A6H8M9"/>
<dbReference type="OMA" id="LVHNDLM"/>
<dbReference type="OrthoDB" id="9949162at2759"/>
<dbReference type="PAN-GO" id="A6H8M9">
    <property type="GO annotations" value="2 GO annotations based on evolutionary models"/>
</dbReference>
<dbReference type="PhylomeDB" id="A6H8M9"/>
<dbReference type="TreeFam" id="TF341878"/>
<dbReference type="PathwayCommons" id="A6H8M9"/>
<dbReference type="BioGRID-ORCS" id="389118">
    <property type="hits" value="9 hits in 1150 CRISPR screens"/>
</dbReference>
<dbReference type="GenomeRNAi" id="389118"/>
<dbReference type="Pharos" id="A6H8M9">
    <property type="development level" value="Tdark"/>
</dbReference>
<dbReference type="PRO" id="PR:A6H8M9"/>
<dbReference type="Proteomes" id="UP000005640">
    <property type="component" value="Chromosome 3"/>
</dbReference>
<dbReference type="RNAct" id="A6H8M9">
    <property type="molecule type" value="protein"/>
</dbReference>
<dbReference type="Bgee" id="ENSG00000187492">
    <property type="expression patterns" value="Expressed in right uterine tube and 85 other cell types or tissues"/>
</dbReference>
<dbReference type="ExpressionAtlas" id="A6H8M9">
    <property type="expression patterns" value="baseline and differential"/>
</dbReference>
<dbReference type="GO" id="GO:0005886">
    <property type="term" value="C:plasma membrane"/>
    <property type="evidence" value="ECO:0000318"/>
    <property type="project" value="GO_Central"/>
</dbReference>
<dbReference type="GO" id="GO:0005509">
    <property type="term" value="F:calcium ion binding"/>
    <property type="evidence" value="ECO:0007669"/>
    <property type="project" value="InterPro"/>
</dbReference>
<dbReference type="GO" id="GO:0007155">
    <property type="term" value="P:cell adhesion"/>
    <property type="evidence" value="ECO:0000318"/>
    <property type="project" value="GO_Central"/>
</dbReference>
<dbReference type="GO" id="GO:0007156">
    <property type="term" value="P:homophilic cell adhesion via plasma membrane adhesion molecules"/>
    <property type="evidence" value="ECO:0007669"/>
    <property type="project" value="InterPro"/>
</dbReference>
<dbReference type="CDD" id="cd11304">
    <property type="entry name" value="Cadherin_repeat"/>
    <property type="match status" value="3"/>
</dbReference>
<dbReference type="FunFam" id="2.60.40.60:FF:000260">
    <property type="entry name" value="Cadherin related family member 4"/>
    <property type="match status" value="1"/>
</dbReference>
<dbReference type="FunFam" id="2.60.40.60:FF:000268">
    <property type="entry name" value="Cadherin related family member 4"/>
    <property type="match status" value="1"/>
</dbReference>
<dbReference type="FunFam" id="2.60.40.60:FF:000291">
    <property type="entry name" value="Cadherin related family member 4"/>
    <property type="match status" value="1"/>
</dbReference>
<dbReference type="FunFam" id="2.60.40.60:FF:000300">
    <property type="entry name" value="Cadherin related family member 4"/>
    <property type="match status" value="1"/>
</dbReference>
<dbReference type="Gene3D" id="2.60.40.60">
    <property type="entry name" value="Cadherins"/>
    <property type="match status" value="4"/>
</dbReference>
<dbReference type="InterPro" id="IPR050971">
    <property type="entry name" value="Cadherin-domain_protein"/>
</dbReference>
<dbReference type="InterPro" id="IPR002126">
    <property type="entry name" value="Cadherin-like_dom"/>
</dbReference>
<dbReference type="InterPro" id="IPR015919">
    <property type="entry name" value="Cadherin-like_sf"/>
</dbReference>
<dbReference type="InterPro" id="IPR020894">
    <property type="entry name" value="Cadherin_CS"/>
</dbReference>
<dbReference type="PANTHER" id="PTHR24025">
    <property type="entry name" value="DESMOGLEIN FAMILY MEMBER"/>
    <property type="match status" value="1"/>
</dbReference>
<dbReference type="PANTHER" id="PTHR24025:SF23">
    <property type="entry name" value="NEURAL-CADHERIN"/>
    <property type="match status" value="1"/>
</dbReference>
<dbReference type="Pfam" id="PF00028">
    <property type="entry name" value="Cadherin"/>
    <property type="match status" value="1"/>
</dbReference>
<dbReference type="PRINTS" id="PR00205">
    <property type="entry name" value="CADHERIN"/>
</dbReference>
<dbReference type="SMART" id="SM00112">
    <property type="entry name" value="CA"/>
    <property type="match status" value="2"/>
</dbReference>
<dbReference type="SUPFAM" id="SSF49313">
    <property type="entry name" value="Cadherin-like"/>
    <property type="match status" value="4"/>
</dbReference>
<dbReference type="PROSITE" id="PS00232">
    <property type="entry name" value="CADHERIN_1"/>
    <property type="match status" value="1"/>
</dbReference>
<dbReference type="PROSITE" id="PS50268">
    <property type="entry name" value="CADHERIN_2"/>
    <property type="match status" value="3"/>
</dbReference>
<name>CDHR4_HUMAN</name>